<feature type="chain" id="PRO_1000147958" description="Fumarate reductase subunit D">
    <location>
        <begin position="1"/>
        <end position="119"/>
    </location>
</feature>
<feature type="transmembrane region" description="Helical" evidence="1">
    <location>
        <begin position="25"/>
        <end position="45"/>
    </location>
</feature>
<feature type="transmembrane region" description="Helical" evidence="1">
    <location>
        <begin position="61"/>
        <end position="81"/>
    </location>
</feature>
<feature type="transmembrane region" description="Helical" evidence="1">
    <location>
        <begin position="99"/>
        <end position="119"/>
    </location>
</feature>
<protein>
    <recommendedName>
        <fullName evidence="1">Fumarate reductase subunit D</fullName>
    </recommendedName>
    <alternativeName>
        <fullName evidence="1">Fumarate reductase 13 kDa hydrophobic protein</fullName>
    </alternativeName>
    <alternativeName>
        <fullName evidence="1">Quinol-fumarate reductase subunit D</fullName>
        <shortName evidence="1">QFR subunit D</shortName>
    </alternativeName>
</protein>
<accession>C0Q6B2</accession>
<comment type="function">
    <text evidence="1">Two distinct, membrane-bound, FAD-containing enzymes are responsible for the catalysis of fumarate and succinate interconversion; fumarate reductase is used in anaerobic growth, and succinate dehydrogenase is used in aerobic growth. Anchors the catalytic components of the fumarate reductase complex to the cell inner membrane, binds quinones.</text>
</comment>
<comment type="subunit">
    <text evidence="1">Part of an enzyme complex containing four subunits: a flavoprotein (FrdA), an iron-sulfur protein (FrdB), and two hydrophobic anchor proteins (FrdC and FrdD).</text>
</comment>
<comment type="subcellular location">
    <subcellularLocation>
        <location evidence="1">Cell inner membrane</location>
        <topology evidence="1">Multi-pass membrane protein</topology>
    </subcellularLocation>
</comment>
<comment type="similarity">
    <text evidence="1">Belongs to the FrdD family.</text>
</comment>
<evidence type="ECO:0000255" key="1">
    <source>
        <dbReference type="HAMAP-Rule" id="MF_00709"/>
    </source>
</evidence>
<proteinExistence type="inferred from homology"/>
<organism>
    <name type="scientific">Salmonella paratyphi C (strain RKS4594)</name>
    <dbReference type="NCBI Taxonomy" id="476213"/>
    <lineage>
        <taxon>Bacteria</taxon>
        <taxon>Pseudomonadati</taxon>
        <taxon>Pseudomonadota</taxon>
        <taxon>Gammaproteobacteria</taxon>
        <taxon>Enterobacterales</taxon>
        <taxon>Enterobacteriaceae</taxon>
        <taxon>Salmonella</taxon>
    </lineage>
</organism>
<name>FRDD_SALPC</name>
<keyword id="KW-0997">Cell inner membrane</keyword>
<keyword id="KW-1003">Cell membrane</keyword>
<keyword id="KW-0472">Membrane</keyword>
<keyword id="KW-0812">Transmembrane</keyword>
<keyword id="KW-1133">Transmembrane helix</keyword>
<gene>
    <name evidence="1" type="primary">frdD</name>
    <name type="ordered locus">SPC_4490</name>
</gene>
<reference key="1">
    <citation type="journal article" date="2009" name="PLoS ONE">
        <title>Salmonella paratyphi C: genetic divergence from Salmonella choleraesuis and pathogenic convergence with Salmonella typhi.</title>
        <authorList>
            <person name="Liu W.-Q."/>
            <person name="Feng Y."/>
            <person name="Wang Y."/>
            <person name="Zou Q.-H."/>
            <person name="Chen F."/>
            <person name="Guo J.-T."/>
            <person name="Peng Y.-H."/>
            <person name="Jin Y."/>
            <person name="Li Y.-G."/>
            <person name="Hu S.-N."/>
            <person name="Johnston R.N."/>
            <person name="Liu G.-R."/>
            <person name="Liu S.-L."/>
        </authorList>
    </citation>
    <scope>NUCLEOTIDE SEQUENCE [LARGE SCALE GENOMIC DNA]</scope>
    <source>
        <strain>RKS4594</strain>
    </source>
</reference>
<dbReference type="EMBL" id="CP000857">
    <property type="protein sequence ID" value="ACN48542.1"/>
    <property type="molecule type" value="Genomic_DNA"/>
</dbReference>
<dbReference type="RefSeq" id="WP_000609650.1">
    <property type="nucleotide sequence ID" value="NC_012125.1"/>
</dbReference>
<dbReference type="SMR" id="C0Q6B2"/>
<dbReference type="KEGG" id="sei:SPC_4490"/>
<dbReference type="HOGENOM" id="CLU_168367_0_0_6"/>
<dbReference type="Proteomes" id="UP000001599">
    <property type="component" value="Chromosome"/>
</dbReference>
<dbReference type="GO" id="GO:0045283">
    <property type="term" value="C:fumarate reductase complex"/>
    <property type="evidence" value="ECO:0007669"/>
    <property type="project" value="UniProtKB-UniRule"/>
</dbReference>
<dbReference type="GO" id="GO:0005886">
    <property type="term" value="C:plasma membrane"/>
    <property type="evidence" value="ECO:0007669"/>
    <property type="project" value="UniProtKB-SubCell"/>
</dbReference>
<dbReference type="GO" id="GO:0000104">
    <property type="term" value="F:succinate dehydrogenase activity"/>
    <property type="evidence" value="ECO:0007669"/>
    <property type="project" value="UniProtKB-UniRule"/>
</dbReference>
<dbReference type="GO" id="GO:0006106">
    <property type="term" value="P:fumarate metabolic process"/>
    <property type="evidence" value="ECO:0007669"/>
    <property type="project" value="InterPro"/>
</dbReference>
<dbReference type="CDD" id="cd00547">
    <property type="entry name" value="QFR_TypeD_subunitD"/>
    <property type="match status" value="1"/>
</dbReference>
<dbReference type="FunFam" id="1.20.1300.10:FF:000002">
    <property type="entry name" value="Fumarate reductase subunit D"/>
    <property type="match status" value="1"/>
</dbReference>
<dbReference type="Gene3D" id="1.20.1300.10">
    <property type="entry name" value="Fumarate reductase/succinate dehydrogenase, transmembrane subunit"/>
    <property type="match status" value="1"/>
</dbReference>
<dbReference type="HAMAP" id="MF_00709">
    <property type="entry name" value="Fumarate_red_D"/>
    <property type="match status" value="1"/>
</dbReference>
<dbReference type="InterPro" id="IPR003418">
    <property type="entry name" value="Fumarate_red_D"/>
</dbReference>
<dbReference type="InterPro" id="IPR034804">
    <property type="entry name" value="SQR/QFR_C/D"/>
</dbReference>
<dbReference type="NCBIfam" id="NF003977">
    <property type="entry name" value="PRK05470.1-1"/>
    <property type="match status" value="1"/>
</dbReference>
<dbReference type="Pfam" id="PF02313">
    <property type="entry name" value="Fumarate_red_D"/>
    <property type="match status" value="1"/>
</dbReference>
<dbReference type="PIRSF" id="PIRSF000179">
    <property type="entry name" value="FrdD"/>
    <property type="match status" value="1"/>
</dbReference>
<dbReference type="SUPFAM" id="SSF81343">
    <property type="entry name" value="Fumarate reductase respiratory complex transmembrane subunits"/>
    <property type="match status" value="1"/>
</dbReference>
<sequence>MINPNPKRSDEPVFWGLFGAGGMWGAIIAPVIVLLVGIMLPLGLFPGDALSFERVLTFAQSFIGRVFLFLMIVLPLWCGLHRMHHAMHDLKIHVPAGKWVFYGLAAILTVVTAIGVITL</sequence>